<organism>
    <name type="scientific">Alcanivorax borkumensis (strain ATCC 700651 / DSM 11573 / NCIMB 13689 / SK2)</name>
    <dbReference type="NCBI Taxonomy" id="393595"/>
    <lineage>
        <taxon>Bacteria</taxon>
        <taxon>Pseudomonadati</taxon>
        <taxon>Pseudomonadota</taxon>
        <taxon>Gammaproteobacteria</taxon>
        <taxon>Oceanospirillales</taxon>
        <taxon>Alcanivoracaceae</taxon>
        <taxon>Alcanivorax</taxon>
    </lineage>
</organism>
<proteinExistence type="inferred from homology"/>
<reference key="1">
    <citation type="journal article" date="2006" name="Nat. Biotechnol.">
        <title>Genome sequence of the ubiquitous hydrocarbon-degrading marine bacterium Alcanivorax borkumensis.</title>
        <authorList>
            <person name="Schneiker S."/>
            <person name="Martins dos Santos V.A.P."/>
            <person name="Bartels D."/>
            <person name="Bekel T."/>
            <person name="Brecht M."/>
            <person name="Buhrmester J."/>
            <person name="Chernikova T.N."/>
            <person name="Denaro R."/>
            <person name="Ferrer M."/>
            <person name="Gertler C."/>
            <person name="Goesmann A."/>
            <person name="Golyshina O.V."/>
            <person name="Kaminski F."/>
            <person name="Khachane A.N."/>
            <person name="Lang S."/>
            <person name="Linke B."/>
            <person name="McHardy A.C."/>
            <person name="Meyer F."/>
            <person name="Nechitaylo T."/>
            <person name="Puehler A."/>
            <person name="Regenhardt D."/>
            <person name="Rupp O."/>
            <person name="Sabirova J.S."/>
            <person name="Selbitschka W."/>
            <person name="Yakimov M.M."/>
            <person name="Timmis K.N."/>
            <person name="Vorhoelter F.-J."/>
            <person name="Weidner S."/>
            <person name="Kaiser O."/>
            <person name="Golyshin P.N."/>
        </authorList>
    </citation>
    <scope>NUCLEOTIDE SEQUENCE [LARGE SCALE GENOMIC DNA]</scope>
    <source>
        <strain>ATCC 700651 / DSM 11573 / NCIMB 13689 / SK2</strain>
    </source>
</reference>
<name>DCD_ALCBS</name>
<accession>Q0VP73</accession>
<keyword id="KW-0378">Hydrolase</keyword>
<keyword id="KW-0546">Nucleotide metabolism</keyword>
<keyword id="KW-0547">Nucleotide-binding</keyword>
<keyword id="KW-1185">Reference proteome</keyword>
<sequence length="189" mass="21285">MTIKSDRWISRMAAEKGMIEPFQPGQVRADENGEKLISYGVSSYGYDVRCADEFKVFTNIHSATVDPKAFDERSFVDVKGEYCIIPPNSFALARTVEYFRIPRNVLTICLGKSTYARCGIIVNVTPLEPEWEGHVTLEFSNTTTLPAKIYAHEGVAQMLFFESDEVCETSYMDRGGKYQGQRGVTLPRA</sequence>
<evidence type="ECO:0000255" key="1">
    <source>
        <dbReference type="HAMAP-Rule" id="MF_00146"/>
    </source>
</evidence>
<comment type="function">
    <text evidence="1">Catalyzes the deamination of dCTP to dUTP.</text>
</comment>
<comment type="catalytic activity">
    <reaction evidence="1">
        <text>dCTP + H2O + H(+) = dUTP + NH4(+)</text>
        <dbReference type="Rhea" id="RHEA:22680"/>
        <dbReference type="ChEBI" id="CHEBI:15377"/>
        <dbReference type="ChEBI" id="CHEBI:15378"/>
        <dbReference type="ChEBI" id="CHEBI:28938"/>
        <dbReference type="ChEBI" id="CHEBI:61481"/>
        <dbReference type="ChEBI" id="CHEBI:61555"/>
        <dbReference type="EC" id="3.5.4.13"/>
    </reaction>
</comment>
<comment type="pathway">
    <text evidence="1">Pyrimidine metabolism; dUMP biosynthesis; dUMP from dCTP (dUTP route): step 1/2.</text>
</comment>
<comment type="subunit">
    <text evidence="1">Homotrimer.</text>
</comment>
<comment type="similarity">
    <text evidence="1">Belongs to the dCTP deaminase family.</text>
</comment>
<protein>
    <recommendedName>
        <fullName evidence="1">dCTP deaminase</fullName>
        <ecNumber evidence="1">3.5.4.13</ecNumber>
    </recommendedName>
    <alternativeName>
        <fullName evidence="1">Deoxycytidine triphosphate deaminase</fullName>
    </alternativeName>
</protein>
<dbReference type="EC" id="3.5.4.13" evidence="1"/>
<dbReference type="EMBL" id="AM286690">
    <property type="protein sequence ID" value="CAL17025.1"/>
    <property type="molecule type" value="Genomic_DNA"/>
</dbReference>
<dbReference type="RefSeq" id="WP_011588858.1">
    <property type="nucleotide sequence ID" value="NC_008260.1"/>
</dbReference>
<dbReference type="SMR" id="Q0VP73"/>
<dbReference type="STRING" id="393595.ABO_1577"/>
<dbReference type="KEGG" id="abo:ABO_1577"/>
<dbReference type="eggNOG" id="COG0717">
    <property type="taxonomic scope" value="Bacteria"/>
</dbReference>
<dbReference type="HOGENOM" id="CLU_087476_4_0_6"/>
<dbReference type="OrthoDB" id="9780956at2"/>
<dbReference type="UniPathway" id="UPA00610">
    <property type="reaction ID" value="UER00665"/>
</dbReference>
<dbReference type="Proteomes" id="UP000008871">
    <property type="component" value="Chromosome"/>
</dbReference>
<dbReference type="GO" id="GO:0008829">
    <property type="term" value="F:dCTP deaminase activity"/>
    <property type="evidence" value="ECO:0007669"/>
    <property type="project" value="UniProtKB-UniRule"/>
</dbReference>
<dbReference type="GO" id="GO:0000166">
    <property type="term" value="F:nucleotide binding"/>
    <property type="evidence" value="ECO:0007669"/>
    <property type="project" value="UniProtKB-KW"/>
</dbReference>
<dbReference type="GO" id="GO:0006226">
    <property type="term" value="P:dUMP biosynthetic process"/>
    <property type="evidence" value="ECO:0007669"/>
    <property type="project" value="UniProtKB-UniPathway"/>
</dbReference>
<dbReference type="GO" id="GO:0006229">
    <property type="term" value="P:dUTP biosynthetic process"/>
    <property type="evidence" value="ECO:0007669"/>
    <property type="project" value="UniProtKB-UniRule"/>
</dbReference>
<dbReference type="GO" id="GO:0015949">
    <property type="term" value="P:nucleobase-containing small molecule interconversion"/>
    <property type="evidence" value="ECO:0007669"/>
    <property type="project" value="TreeGrafter"/>
</dbReference>
<dbReference type="CDD" id="cd07557">
    <property type="entry name" value="trimeric_dUTPase"/>
    <property type="match status" value="1"/>
</dbReference>
<dbReference type="FunFam" id="2.70.40.10:FF:000001">
    <property type="entry name" value="dCTP deaminase"/>
    <property type="match status" value="1"/>
</dbReference>
<dbReference type="Gene3D" id="2.70.40.10">
    <property type="match status" value="1"/>
</dbReference>
<dbReference type="HAMAP" id="MF_00146">
    <property type="entry name" value="dCTP_deaminase"/>
    <property type="match status" value="1"/>
</dbReference>
<dbReference type="InterPro" id="IPR011962">
    <property type="entry name" value="dCTP_deaminase"/>
</dbReference>
<dbReference type="InterPro" id="IPR036157">
    <property type="entry name" value="dUTPase-like_sf"/>
</dbReference>
<dbReference type="InterPro" id="IPR033704">
    <property type="entry name" value="dUTPase_trimeric"/>
</dbReference>
<dbReference type="NCBIfam" id="TIGR02274">
    <property type="entry name" value="dCTP_deam"/>
    <property type="match status" value="1"/>
</dbReference>
<dbReference type="PANTHER" id="PTHR42680">
    <property type="entry name" value="DCTP DEAMINASE"/>
    <property type="match status" value="1"/>
</dbReference>
<dbReference type="PANTHER" id="PTHR42680:SF3">
    <property type="entry name" value="DCTP DEAMINASE"/>
    <property type="match status" value="1"/>
</dbReference>
<dbReference type="Pfam" id="PF22769">
    <property type="entry name" value="DCD"/>
    <property type="match status" value="1"/>
</dbReference>
<dbReference type="SUPFAM" id="SSF51283">
    <property type="entry name" value="dUTPase-like"/>
    <property type="match status" value="1"/>
</dbReference>
<gene>
    <name evidence="1" type="primary">dcd</name>
    <name type="ordered locus">ABO_1577</name>
</gene>
<feature type="chain" id="PRO_1000009675" description="dCTP deaminase">
    <location>
        <begin position="1"/>
        <end position="189"/>
    </location>
</feature>
<feature type="active site" description="Proton donor/acceptor" evidence="1">
    <location>
        <position position="138"/>
    </location>
</feature>
<feature type="binding site" evidence="1">
    <location>
        <begin position="112"/>
        <end position="117"/>
    </location>
    <ligand>
        <name>dCTP</name>
        <dbReference type="ChEBI" id="CHEBI:61481"/>
    </ligand>
</feature>
<feature type="binding site" evidence="1">
    <location>
        <begin position="136"/>
        <end position="138"/>
    </location>
    <ligand>
        <name>dCTP</name>
        <dbReference type="ChEBI" id="CHEBI:61481"/>
    </ligand>
</feature>
<feature type="binding site" evidence="1">
    <location>
        <position position="157"/>
    </location>
    <ligand>
        <name>dCTP</name>
        <dbReference type="ChEBI" id="CHEBI:61481"/>
    </ligand>
</feature>
<feature type="binding site" evidence="1">
    <location>
        <position position="171"/>
    </location>
    <ligand>
        <name>dCTP</name>
        <dbReference type="ChEBI" id="CHEBI:61481"/>
    </ligand>
</feature>
<feature type="binding site" evidence="1">
    <location>
        <position position="181"/>
    </location>
    <ligand>
        <name>dCTP</name>
        <dbReference type="ChEBI" id="CHEBI:61481"/>
    </ligand>
</feature>